<comment type="similarity">
    <text evidence="1">Belongs to the UPF0229 family.</text>
</comment>
<protein>
    <recommendedName>
        <fullName evidence="1">UPF0229 protein PST_0721</fullName>
    </recommendedName>
</protein>
<gene>
    <name type="ordered locus">PST_0721</name>
</gene>
<organism>
    <name type="scientific">Stutzerimonas stutzeri (strain A1501)</name>
    <name type="common">Pseudomonas stutzeri</name>
    <dbReference type="NCBI Taxonomy" id="379731"/>
    <lineage>
        <taxon>Bacteria</taxon>
        <taxon>Pseudomonadati</taxon>
        <taxon>Pseudomonadota</taxon>
        <taxon>Gammaproteobacteria</taxon>
        <taxon>Pseudomonadales</taxon>
        <taxon>Pseudomonadaceae</taxon>
        <taxon>Stutzerimonas</taxon>
    </lineage>
</organism>
<reference key="1">
    <citation type="journal article" date="2008" name="Proc. Natl. Acad. Sci. U.S.A.">
        <title>Nitrogen fixation island and rhizosphere competence traits in the genome of root-associated Pseudomonas stutzeri A1501.</title>
        <authorList>
            <person name="Yan Y."/>
            <person name="Yang J."/>
            <person name="Dou Y."/>
            <person name="Chen M."/>
            <person name="Ping S."/>
            <person name="Peng J."/>
            <person name="Lu W."/>
            <person name="Zhang W."/>
            <person name="Yao Z."/>
            <person name="Li H."/>
            <person name="Liu W."/>
            <person name="He S."/>
            <person name="Geng L."/>
            <person name="Zhang X."/>
            <person name="Yang F."/>
            <person name="Yu H."/>
            <person name="Zhan Y."/>
            <person name="Li D."/>
            <person name="Lin Z."/>
            <person name="Wang Y."/>
            <person name="Elmerich C."/>
            <person name="Lin M."/>
            <person name="Jin Q."/>
        </authorList>
    </citation>
    <scope>NUCLEOTIDE SEQUENCE [LARGE SCALE GENOMIC DNA]</scope>
    <source>
        <strain>A1501</strain>
    </source>
</reference>
<name>Y721_STUS1</name>
<accession>A4VHH5</accession>
<proteinExistence type="inferred from homology"/>
<dbReference type="EMBL" id="CP000304">
    <property type="protein sequence ID" value="ABP78426.1"/>
    <property type="molecule type" value="Genomic_DNA"/>
</dbReference>
<dbReference type="RefSeq" id="WP_011911933.1">
    <property type="nucleotide sequence ID" value="NC_009434.1"/>
</dbReference>
<dbReference type="KEGG" id="psa:PST_0721"/>
<dbReference type="eggNOG" id="COG2718">
    <property type="taxonomic scope" value="Bacteria"/>
</dbReference>
<dbReference type="HOGENOM" id="CLU_049702_0_0_6"/>
<dbReference type="Proteomes" id="UP000000233">
    <property type="component" value="Chromosome"/>
</dbReference>
<dbReference type="HAMAP" id="MF_01232">
    <property type="entry name" value="UPF0229"/>
    <property type="match status" value="1"/>
</dbReference>
<dbReference type="InterPro" id="IPR006698">
    <property type="entry name" value="UPF0229"/>
</dbReference>
<dbReference type="InterPro" id="IPR036465">
    <property type="entry name" value="vWFA_dom_sf"/>
</dbReference>
<dbReference type="NCBIfam" id="NF003707">
    <property type="entry name" value="PRK05325.1-2"/>
    <property type="match status" value="1"/>
</dbReference>
<dbReference type="NCBIfam" id="NF003708">
    <property type="entry name" value="PRK05325.1-3"/>
    <property type="match status" value="1"/>
</dbReference>
<dbReference type="PANTHER" id="PTHR30510">
    <property type="entry name" value="UPF0229 PROTEIN YEAH"/>
    <property type="match status" value="1"/>
</dbReference>
<dbReference type="PANTHER" id="PTHR30510:SF2">
    <property type="entry name" value="UPF0229 PROTEIN YEAH"/>
    <property type="match status" value="1"/>
</dbReference>
<dbReference type="Pfam" id="PF04285">
    <property type="entry name" value="DUF444"/>
    <property type="match status" value="1"/>
</dbReference>
<dbReference type="SUPFAM" id="SSF53300">
    <property type="entry name" value="vWA-like"/>
    <property type="match status" value="1"/>
</dbReference>
<feature type="chain" id="PRO_1000066876" description="UPF0229 protein PST_0721">
    <location>
        <begin position="1"/>
        <end position="423"/>
    </location>
</feature>
<feature type="region of interest" description="Disordered" evidence="2">
    <location>
        <begin position="84"/>
        <end position="109"/>
    </location>
</feature>
<keyword id="KW-1185">Reference proteome</keyword>
<sequence length="423" mass="48474">MSYVIDRRLNGKNKSTVNRQRFLQRYRGHIKKAVEEAVGRRSITDMEHGEQISIPGRDIDEPVLHHGRGGRQTIVHPGNKEFVAGERIPRPQGGGGGQGAGQASNSGEGMDDFVFQITQEEFLDFMFEDLELPNLVKRHLTGTDTFKTVRAGIANEGNPSRINIVRTLRSAHARRIALSGSSRAQLRALKAELERLRLEEPHNFGDIKAAEEEIERLKARINRVPFLDTFDLKYNLLVKHPNPSSKAVMFCLMDVSGSMTQSTKDIAKRFFILLYLFLKRNYDKIDVVFIRHHTSAKEVDEEEFFYSRETGGTIVSSALKMMQEIMAERYPANEWNIYAAQASDGDNWNDDSPLCRDILINQIMPFVQYFTYVEITPREHQALWYEYNQVAEAFSDAFAQQQLVSAADIYPVFRELFQRRMTS</sequence>
<evidence type="ECO:0000255" key="1">
    <source>
        <dbReference type="HAMAP-Rule" id="MF_01232"/>
    </source>
</evidence>
<evidence type="ECO:0000256" key="2">
    <source>
        <dbReference type="SAM" id="MobiDB-lite"/>
    </source>
</evidence>